<accession>P38474</accession>
<gene>
    <name type="primary">YMF32</name>
</gene>
<sequence>MSEIAKWLNTRFQLTLIPKENSNTEFVGPCIFREDGDNTKLFGFRTTLFYTYIGMQTCLLSE</sequence>
<keyword id="KW-0496">Mitochondrion</keyword>
<evidence type="ECO:0000305" key="1"/>
<protein>
    <recommendedName>
        <fullName>Uncharacterized mitochondrial protein ymf32</fullName>
    </recommendedName>
    <alternativeName>
        <fullName>ORF62</fullName>
    </alternativeName>
</protein>
<name>YMF32_MARPO</name>
<dbReference type="EMBL" id="M68929">
    <property type="protein sequence ID" value="AAC09448.1"/>
    <property type="molecule type" value="Genomic_DNA"/>
</dbReference>
<dbReference type="PIR" id="S25999">
    <property type="entry name" value="S25999"/>
</dbReference>
<dbReference type="GO" id="GO:0005739">
    <property type="term" value="C:mitochondrion"/>
    <property type="evidence" value="ECO:0007669"/>
    <property type="project" value="UniProtKB-SubCell"/>
</dbReference>
<organism>
    <name type="scientific">Marchantia polymorpha</name>
    <name type="common">Common liverwort</name>
    <name type="synonym">Marchantia aquatica</name>
    <dbReference type="NCBI Taxonomy" id="3197"/>
    <lineage>
        <taxon>Eukaryota</taxon>
        <taxon>Viridiplantae</taxon>
        <taxon>Streptophyta</taxon>
        <taxon>Embryophyta</taxon>
        <taxon>Marchantiophyta</taxon>
        <taxon>Marchantiopsida</taxon>
        <taxon>Marchantiidae</taxon>
        <taxon>Marchantiales</taxon>
        <taxon>Marchantiaceae</taxon>
        <taxon>Marchantia</taxon>
    </lineage>
</organism>
<feature type="chain" id="PRO_0000196859" description="Uncharacterized mitochondrial protein ymf32">
    <location>
        <begin position="1"/>
        <end position="62"/>
    </location>
</feature>
<reference key="1">
    <citation type="journal article" date="1992" name="J. Mol. Biol.">
        <title>Gene organization deduced from the complete sequence of liverwort Marchantia polymorpha mitochondrial DNA. A primitive form of plant mitochondrial genome.</title>
        <authorList>
            <person name="Oda K."/>
            <person name="Yamato K."/>
            <person name="Ohta E."/>
            <person name="Nakamura Y."/>
            <person name="Takemura M."/>
            <person name="Nozato N."/>
            <person name="Akashi K."/>
            <person name="Kanegae T."/>
            <person name="Ogura Y."/>
            <person name="Kohchi T."/>
            <person name="Ohyama K."/>
        </authorList>
    </citation>
    <scope>NUCLEOTIDE SEQUENCE [GENOMIC DNA]</scope>
</reference>
<comment type="subcellular location">
    <subcellularLocation>
        <location evidence="1">Mitochondrion</location>
    </subcellularLocation>
</comment>
<proteinExistence type="predicted"/>
<geneLocation type="mitochondrion"/>